<feature type="chain" id="PRO_0000160110" description="Superoxide dismutase [Mn]">
    <location>
        <begin position="1"/>
        <end position="203"/>
    </location>
</feature>
<feature type="binding site" evidence="1">
    <location>
        <position position="27"/>
    </location>
    <ligand>
        <name>Mn(2+)</name>
        <dbReference type="ChEBI" id="CHEBI:29035"/>
    </ligand>
</feature>
<feature type="binding site" evidence="1">
    <location>
        <position position="81"/>
    </location>
    <ligand>
        <name>Mn(2+)</name>
        <dbReference type="ChEBI" id="CHEBI:29035"/>
    </ligand>
</feature>
<feature type="binding site" evidence="1">
    <location>
        <position position="164"/>
    </location>
    <ligand>
        <name>Mn(2+)</name>
        <dbReference type="ChEBI" id="CHEBI:29035"/>
    </ligand>
</feature>
<feature type="binding site" evidence="1">
    <location>
        <position position="168"/>
    </location>
    <ligand>
        <name>Mn(2+)</name>
        <dbReference type="ChEBI" id="CHEBI:29035"/>
    </ligand>
</feature>
<feature type="sequence conflict" description="In Ref. 1; AAB47971." evidence="2" ref="1">
    <original>V</original>
    <variation>I</variation>
    <location>
        <position position="53"/>
    </location>
</feature>
<feature type="sequence conflict" description="In Ref. 1; AAB47971." evidence="2" ref="1">
    <original>M</original>
    <variation>L</variation>
    <location>
        <position position="88"/>
    </location>
</feature>
<feature type="sequence conflict" description="In Ref. 1; AAB47971." evidence="2" ref="1">
    <original>L</original>
    <variation>V</variation>
    <location>
        <position position="123"/>
    </location>
</feature>
<feature type="sequence conflict" description="In Ref. 1; AAB47971." evidence="2" ref="1">
    <original>V</original>
    <variation>L</variation>
    <location>
        <position position="141"/>
    </location>
</feature>
<feature type="sequence conflict" description="In Ref. 1; AAB47971." evidence="2" ref="1">
    <original>D</original>
    <variation>E</variation>
    <location>
        <position position="180"/>
    </location>
</feature>
<feature type="sequence conflict" description="In Ref. 1; AAB47971." evidence="2" ref="1">
    <original>V</original>
    <variation>A</variation>
    <location>
        <position position="188"/>
    </location>
</feature>
<feature type="sequence conflict" description="In Ref. 1; AAB47971." evidence="2" ref="1">
    <original>D</original>
    <variation>E</variation>
    <location>
        <position position="192"/>
    </location>
</feature>
<proteinExistence type="inferred from homology"/>
<reference key="1">
    <citation type="journal article" date="1996" name="Mol. Plant Microbe Interact.">
        <title>A gene for superoxide dismutase from Xanthomonas campestris pv. campestris and its expression during bacterial-plant interactions.</title>
        <authorList>
            <person name="Smith S.G."/>
            <person name="Wilson T.J."/>
            <person name="Dow J.M."/>
            <person name="Daniels M.J."/>
        </authorList>
    </citation>
    <scope>NUCLEOTIDE SEQUENCE [GENOMIC DNA]</scope>
</reference>
<reference key="2">
    <citation type="journal article" date="2005" name="Genome Res.">
        <title>Comparative and functional genomic analyses of the pathogenicity of phytopathogen Xanthomonas campestris pv. campestris.</title>
        <authorList>
            <person name="Qian W."/>
            <person name="Jia Y."/>
            <person name="Ren S.-X."/>
            <person name="He Y.-Q."/>
            <person name="Feng J.-X."/>
            <person name="Lu L.-F."/>
            <person name="Sun Q."/>
            <person name="Ying G."/>
            <person name="Tang D.-J."/>
            <person name="Tang H."/>
            <person name="Wu W."/>
            <person name="Hao P."/>
            <person name="Wang L."/>
            <person name="Jiang B.-L."/>
            <person name="Zeng S."/>
            <person name="Gu W.-Y."/>
            <person name="Lu G."/>
            <person name="Rong L."/>
            <person name="Tian Y."/>
            <person name="Yao Z."/>
            <person name="Fu G."/>
            <person name="Chen B."/>
            <person name="Fang R."/>
            <person name="Qiang B."/>
            <person name="Chen Z."/>
            <person name="Zhao G.-P."/>
            <person name="Tang J.-L."/>
            <person name="He C."/>
        </authorList>
    </citation>
    <scope>NUCLEOTIDE SEQUENCE [LARGE SCALE GENOMIC DNA]</scope>
    <source>
        <strain>8004</strain>
    </source>
</reference>
<accession>P0C0F9</accession>
<accession>Q4UVM3</accession>
<comment type="function">
    <text>Destroys superoxide anion radicals which are normally produced within the cells and which are toxic to biological systems.</text>
</comment>
<comment type="catalytic activity">
    <reaction>
        <text>2 superoxide + 2 H(+) = H2O2 + O2</text>
        <dbReference type="Rhea" id="RHEA:20696"/>
        <dbReference type="ChEBI" id="CHEBI:15378"/>
        <dbReference type="ChEBI" id="CHEBI:15379"/>
        <dbReference type="ChEBI" id="CHEBI:16240"/>
        <dbReference type="ChEBI" id="CHEBI:18421"/>
        <dbReference type="EC" id="1.15.1.1"/>
    </reaction>
</comment>
<comment type="cofactor">
    <cofactor evidence="1">
        <name>Mn(2+)</name>
        <dbReference type="ChEBI" id="CHEBI:29035"/>
    </cofactor>
    <text evidence="1">Binds 1 Mn(2+) ion per subunit.</text>
</comment>
<comment type="similarity">
    <text evidence="2">Belongs to the iron/manganese superoxide dismutase family.</text>
</comment>
<dbReference type="EC" id="1.15.1.1"/>
<dbReference type="EMBL" id="U42464">
    <property type="protein sequence ID" value="AAB47971.1"/>
    <property type="molecule type" value="Genomic_DNA"/>
</dbReference>
<dbReference type="EMBL" id="CP000050">
    <property type="protein sequence ID" value="AAY48900.1"/>
    <property type="molecule type" value="Genomic_DNA"/>
</dbReference>
<dbReference type="RefSeq" id="WP_011037422.1">
    <property type="nucleotide sequence ID" value="NZ_CP155948.1"/>
</dbReference>
<dbReference type="SMR" id="P0C0F9"/>
<dbReference type="KEGG" id="xcb:XC_1837"/>
<dbReference type="HOGENOM" id="CLU_031625_0_1_6"/>
<dbReference type="Proteomes" id="UP000000420">
    <property type="component" value="Chromosome"/>
</dbReference>
<dbReference type="GO" id="GO:0005737">
    <property type="term" value="C:cytoplasm"/>
    <property type="evidence" value="ECO:0007669"/>
    <property type="project" value="TreeGrafter"/>
</dbReference>
<dbReference type="GO" id="GO:0046872">
    <property type="term" value="F:metal ion binding"/>
    <property type="evidence" value="ECO:0007669"/>
    <property type="project" value="UniProtKB-KW"/>
</dbReference>
<dbReference type="GO" id="GO:0004784">
    <property type="term" value="F:superoxide dismutase activity"/>
    <property type="evidence" value="ECO:0007669"/>
    <property type="project" value="UniProtKB-EC"/>
</dbReference>
<dbReference type="FunFam" id="1.10.287.990:FF:000001">
    <property type="entry name" value="Superoxide dismutase"/>
    <property type="match status" value="1"/>
</dbReference>
<dbReference type="FunFam" id="3.55.40.20:FF:000001">
    <property type="entry name" value="Superoxide dismutase"/>
    <property type="match status" value="1"/>
</dbReference>
<dbReference type="Gene3D" id="1.10.287.990">
    <property type="entry name" value="Fe,Mn superoxide dismutase (SOD) domain"/>
    <property type="match status" value="1"/>
</dbReference>
<dbReference type="Gene3D" id="3.55.40.20">
    <property type="entry name" value="Iron/manganese superoxide dismutase, C-terminal domain"/>
    <property type="match status" value="1"/>
</dbReference>
<dbReference type="InterPro" id="IPR001189">
    <property type="entry name" value="Mn/Fe_SOD"/>
</dbReference>
<dbReference type="InterPro" id="IPR019833">
    <property type="entry name" value="Mn/Fe_SOD_BS"/>
</dbReference>
<dbReference type="InterPro" id="IPR019832">
    <property type="entry name" value="Mn/Fe_SOD_C"/>
</dbReference>
<dbReference type="InterPro" id="IPR019831">
    <property type="entry name" value="Mn/Fe_SOD_N"/>
</dbReference>
<dbReference type="InterPro" id="IPR036324">
    <property type="entry name" value="Mn/Fe_SOD_N_sf"/>
</dbReference>
<dbReference type="InterPro" id="IPR036314">
    <property type="entry name" value="SOD_C_sf"/>
</dbReference>
<dbReference type="PANTHER" id="PTHR43595">
    <property type="entry name" value="37S RIBOSOMAL PROTEIN S26, MITOCHONDRIAL"/>
    <property type="match status" value="1"/>
</dbReference>
<dbReference type="PANTHER" id="PTHR43595:SF2">
    <property type="entry name" value="SMALL RIBOSOMAL SUBUNIT PROTEIN MS42"/>
    <property type="match status" value="1"/>
</dbReference>
<dbReference type="Pfam" id="PF02777">
    <property type="entry name" value="Sod_Fe_C"/>
    <property type="match status" value="1"/>
</dbReference>
<dbReference type="Pfam" id="PF00081">
    <property type="entry name" value="Sod_Fe_N"/>
    <property type="match status" value="1"/>
</dbReference>
<dbReference type="PIRSF" id="PIRSF000349">
    <property type="entry name" value="SODismutase"/>
    <property type="match status" value="1"/>
</dbReference>
<dbReference type="PRINTS" id="PR01703">
    <property type="entry name" value="MNSODISMTASE"/>
</dbReference>
<dbReference type="SUPFAM" id="SSF54719">
    <property type="entry name" value="Fe,Mn superoxide dismutase (SOD), C-terminal domain"/>
    <property type="match status" value="1"/>
</dbReference>
<dbReference type="SUPFAM" id="SSF46609">
    <property type="entry name" value="Fe,Mn superoxide dismutase (SOD), N-terminal domain"/>
    <property type="match status" value="1"/>
</dbReference>
<dbReference type="PROSITE" id="PS00088">
    <property type="entry name" value="SOD_MN"/>
    <property type="match status" value="1"/>
</dbReference>
<evidence type="ECO:0000250" key="1"/>
<evidence type="ECO:0000305" key="2"/>
<gene>
    <name type="primary">sodA</name>
    <name type="synonym">sod</name>
    <name type="ordered locus">XC_1837</name>
</gene>
<organism>
    <name type="scientific">Xanthomonas campestris pv. campestris (strain 8004)</name>
    <dbReference type="NCBI Taxonomy" id="314565"/>
    <lineage>
        <taxon>Bacteria</taxon>
        <taxon>Pseudomonadati</taxon>
        <taxon>Pseudomonadota</taxon>
        <taxon>Gammaproteobacteria</taxon>
        <taxon>Lysobacterales</taxon>
        <taxon>Lysobacteraceae</taxon>
        <taxon>Xanthomonas</taxon>
    </lineage>
</organism>
<sequence>MAYTLPQLPYAYDALEPNIDAQTMEIHHTKHHQTYINNVNAALEGTEYADLPVEELVSKLKSLPENLQGPVRNNGGGHANHSLFWTVMSPNGGGEPKGEVAKAIDKDIGGFEKFKEAFTKAALSRFGSGWAWLSVTPDKKVVVESTANQDSPLFEGNTPILGLDVWEHAYYLKYQNRRPDYIGAFYNVVNWDEVERRYHAAIA</sequence>
<name>SODM_XANC8</name>
<protein>
    <recommendedName>
        <fullName>Superoxide dismutase [Mn]</fullName>
        <ecNumber>1.15.1.1</ecNumber>
    </recommendedName>
</protein>
<keyword id="KW-0464">Manganese</keyword>
<keyword id="KW-0479">Metal-binding</keyword>
<keyword id="KW-0560">Oxidoreductase</keyword>